<evidence type="ECO:0000255" key="1">
    <source>
        <dbReference type="HAMAP-Rule" id="MF_00385"/>
    </source>
</evidence>
<evidence type="ECO:0000305" key="2"/>
<reference key="1">
    <citation type="journal article" date="2000" name="Nature">
        <title>The genome sequence of the plant pathogen Xylella fastidiosa.</title>
        <authorList>
            <person name="Simpson A.J.G."/>
            <person name="Reinach F.C."/>
            <person name="Arruda P."/>
            <person name="Abreu F.A."/>
            <person name="Acencio M."/>
            <person name="Alvarenga R."/>
            <person name="Alves L.M.C."/>
            <person name="Araya J.E."/>
            <person name="Baia G.S."/>
            <person name="Baptista C.S."/>
            <person name="Barros M.H."/>
            <person name="Bonaccorsi E.D."/>
            <person name="Bordin S."/>
            <person name="Bove J.M."/>
            <person name="Briones M.R.S."/>
            <person name="Bueno M.R.P."/>
            <person name="Camargo A.A."/>
            <person name="Camargo L.E.A."/>
            <person name="Carraro D.M."/>
            <person name="Carrer H."/>
            <person name="Colauto N.B."/>
            <person name="Colombo C."/>
            <person name="Costa F.F."/>
            <person name="Costa M.C.R."/>
            <person name="Costa-Neto C.M."/>
            <person name="Coutinho L.L."/>
            <person name="Cristofani M."/>
            <person name="Dias-Neto E."/>
            <person name="Docena C."/>
            <person name="El-Dorry H."/>
            <person name="Facincani A.P."/>
            <person name="Ferreira A.J.S."/>
            <person name="Ferreira V.C.A."/>
            <person name="Ferro J.A."/>
            <person name="Fraga J.S."/>
            <person name="Franca S.C."/>
            <person name="Franco M.C."/>
            <person name="Frohme M."/>
            <person name="Furlan L.R."/>
            <person name="Garnier M."/>
            <person name="Goldman G.H."/>
            <person name="Goldman M.H.S."/>
            <person name="Gomes S.L."/>
            <person name="Gruber A."/>
            <person name="Ho P.L."/>
            <person name="Hoheisel J.D."/>
            <person name="Junqueira M.L."/>
            <person name="Kemper E.L."/>
            <person name="Kitajima J.P."/>
            <person name="Krieger J.E."/>
            <person name="Kuramae E.E."/>
            <person name="Laigret F."/>
            <person name="Lambais M.R."/>
            <person name="Leite L.C.C."/>
            <person name="Lemos E.G.M."/>
            <person name="Lemos M.V.F."/>
            <person name="Lopes S.A."/>
            <person name="Lopes C.R."/>
            <person name="Machado J.A."/>
            <person name="Machado M.A."/>
            <person name="Madeira A.M.B.N."/>
            <person name="Madeira H.M.F."/>
            <person name="Marino C.L."/>
            <person name="Marques M.V."/>
            <person name="Martins E.A.L."/>
            <person name="Martins E.M.F."/>
            <person name="Matsukuma A.Y."/>
            <person name="Menck C.F.M."/>
            <person name="Miracca E.C."/>
            <person name="Miyaki C.Y."/>
            <person name="Monteiro-Vitorello C.B."/>
            <person name="Moon D.H."/>
            <person name="Nagai M.A."/>
            <person name="Nascimento A.L.T.O."/>
            <person name="Netto L.E.S."/>
            <person name="Nhani A. Jr."/>
            <person name="Nobrega F.G."/>
            <person name="Nunes L.R."/>
            <person name="Oliveira M.A."/>
            <person name="de Oliveira M.C."/>
            <person name="de Oliveira R.C."/>
            <person name="Palmieri D.A."/>
            <person name="Paris A."/>
            <person name="Peixoto B.R."/>
            <person name="Pereira G.A.G."/>
            <person name="Pereira H.A. Jr."/>
            <person name="Pesquero J.B."/>
            <person name="Quaggio R.B."/>
            <person name="Roberto P.G."/>
            <person name="Rodrigues V."/>
            <person name="de Rosa A.J.M."/>
            <person name="de Rosa V.E. Jr."/>
            <person name="de Sa R.G."/>
            <person name="Santelli R.V."/>
            <person name="Sawasaki H.E."/>
            <person name="da Silva A.C.R."/>
            <person name="da Silva A.M."/>
            <person name="da Silva F.R."/>
            <person name="Silva W.A. Jr."/>
            <person name="da Silveira J.F."/>
            <person name="Silvestri M.L.Z."/>
            <person name="Siqueira W.J."/>
            <person name="de Souza A.A."/>
            <person name="de Souza A.P."/>
            <person name="Terenzi M.F."/>
            <person name="Truffi D."/>
            <person name="Tsai S.M."/>
            <person name="Tsuhako M.H."/>
            <person name="Vallada H."/>
            <person name="Van Sluys M.A."/>
            <person name="Verjovski-Almeida S."/>
            <person name="Vettore A.L."/>
            <person name="Zago M.A."/>
            <person name="Zatz M."/>
            <person name="Meidanis J."/>
            <person name="Setubal J.C."/>
        </authorList>
    </citation>
    <scope>NUCLEOTIDE SEQUENCE [LARGE SCALE GENOMIC DNA]</scope>
    <source>
        <strain>9a5c</strain>
    </source>
</reference>
<gene>
    <name evidence="1" type="primary">rpsP</name>
    <name type="ordered locus">XF_0107</name>
</gene>
<name>RS16_XYLFA</name>
<organism>
    <name type="scientific">Xylella fastidiosa (strain 9a5c)</name>
    <dbReference type="NCBI Taxonomy" id="160492"/>
    <lineage>
        <taxon>Bacteria</taxon>
        <taxon>Pseudomonadati</taxon>
        <taxon>Pseudomonadota</taxon>
        <taxon>Gammaproteobacteria</taxon>
        <taxon>Lysobacterales</taxon>
        <taxon>Lysobacteraceae</taxon>
        <taxon>Xylella</taxon>
    </lineage>
</organism>
<protein>
    <recommendedName>
        <fullName evidence="1">Small ribosomal subunit protein bS16</fullName>
    </recommendedName>
    <alternativeName>
        <fullName evidence="2">30S ribosomal protein S16</fullName>
    </alternativeName>
</protein>
<sequence>MVKIRLTRGGAKKRPFYQIIVTDSRNKRDGRNIERVGHYNPVAQGAESRVVLNMARVEHWVKNGAQLTDKVRSLLKEVSKTQATAA</sequence>
<proteinExistence type="inferred from homology"/>
<dbReference type="EMBL" id="AE003849">
    <property type="protein sequence ID" value="AAF82920.1"/>
    <property type="molecule type" value="Genomic_DNA"/>
</dbReference>
<dbReference type="PIR" id="H82847">
    <property type="entry name" value="H82847"/>
</dbReference>
<dbReference type="RefSeq" id="WP_010892653.1">
    <property type="nucleotide sequence ID" value="NC_002488.3"/>
</dbReference>
<dbReference type="SMR" id="Q9PH39"/>
<dbReference type="STRING" id="160492.XF_0107"/>
<dbReference type="KEGG" id="xfa:XF_0107"/>
<dbReference type="eggNOG" id="COG0228">
    <property type="taxonomic scope" value="Bacteria"/>
</dbReference>
<dbReference type="HOGENOM" id="CLU_100590_5_1_6"/>
<dbReference type="Proteomes" id="UP000000812">
    <property type="component" value="Chromosome"/>
</dbReference>
<dbReference type="GO" id="GO:0005737">
    <property type="term" value="C:cytoplasm"/>
    <property type="evidence" value="ECO:0007669"/>
    <property type="project" value="UniProtKB-ARBA"/>
</dbReference>
<dbReference type="GO" id="GO:0015935">
    <property type="term" value="C:small ribosomal subunit"/>
    <property type="evidence" value="ECO:0007669"/>
    <property type="project" value="TreeGrafter"/>
</dbReference>
<dbReference type="GO" id="GO:0003735">
    <property type="term" value="F:structural constituent of ribosome"/>
    <property type="evidence" value="ECO:0007669"/>
    <property type="project" value="InterPro"/>
</dbReference>
<dbReference type="GO" id="GO:0006412">
    <property type="term" value="P:translation"/>
    <property type="evidence" value="ECO:0007669"/>
    <property type="project" value="UniProtKB-UniRule"/>
</dbReference>
<dbReference type="FunFam" id="3.30.1320.10:FF:000008">
    <property type="entry name" value="30S ribosomal protein S16"/>
    <property type="match status" value="1"/>
</dbReference>
<dbReference type="Gene3D" id="3.30.1320.10">
    <property type="match status" value="1"/>
</dbReference>
<dbReference type="HAMAP" id="MF_00385">
    <property type="entry name" value="Ribosomal_bS16"/>
    <property type="match status" value="1"/>
</dbReference>
<dbReference type="InterPro" id="IPR000307">
    <property type="entry name" value="Ribosomal_bS16"/>
</dbReference>
<dbReference type="InterPro" id="IPR020592">
    <property type="entry name" value="Ribosomal_bS16_CS"/>
</dbReference>
<dbReference type="InterPro" id="IPR023803">
    <property type="entry name" value="Ribosomal_bS16_dom_sf"/>
</dbReference>
<dbReference type="NCBIfam" id="TIGR00002">
    <property type="entry name" value="S16"/>
    <property type="match status" value="1"/>
</dbReference>
<dbReference type="PANTHER" id="PTHR12919">
    <property type="entry name" value="30S RIBOSOMAL PROTEIN S16"/>
    <property type="match status" value="1"/>
</dbReference>
<dbReference type="PANTHER" id="PTHR12919:SF20">
    <property type="entry name" value="SMALL RIBOSOMAL SUBUNIT PROTEIN BS16M"/>
    <property type="match status" value="1"/>
</dbReference>
<dbReference type="Pfam" id="PF00886">
    <property type="entry name" value="Ribosomal_S16"/>
    <property type="match status" value="1"/>
</dbReference>
<dbReference type="SUPFAM" id="SSF54565">
    <property type="entry name" value="Ribosomal protein S16"/>
    <property type="match status" value="1"/>
</dbReference>
<dbReference type="PROSITE" id="PS00732">
    <property type="entry name" value="RIBOSOMAL_S16"/>
    <property type="match status" value="1"/>
</dbReference>
<accession>Q9PH39</accession>
<comment type="similarity">
    <text evidence="1">Belongs to the bacterial ribosomal protein bS16 family.</text>
</comment>
<keyword id="KW-0687">Ribonucleoprotein</keyword>
<keyword id="KW-0689">Ribosomal protein</keyword>
<feature type="chain" id="PRO_0000167287" description="Small ribosomal subunit protein bS16">
    <location>
        <begin position="1"/>
        <end position="86"/>
    </location>
</feature>